<evidence type="ECO:0000255" key="1"/>
<evidence type="ECO:0000256" key="2">
    <source>
        <dbReference type="SAM" id="MobiDB-lite"/>
    </source>
</evidence>
<evidence type="ECO:0000305" key="3"/>
<evidence type="ECO:0007744" key="4">
    <source>
    </source>
</evidence>
<sequence>MGSRYPSHQLSNGLFVSGRPEQPKERAPTMSAVAMPYTGGDIKRSGELGKMFDIPADGTKSRKSGPIPGAPSRSGSFAGTAQSGPGAPMATGRMSGSLASAGSVSMKKTNSGPLSKHGEPLKKSSGPQSGGVTRQNSGSIPILPATGLITSGPITSGPLNSSGAPRKVSGPLDSSGLMKSHMPTVVHNQAVTTLGPEDDFSCLKSFPKPVLWLVVLIFIMGFLAGGFILGAVHNPILLVVVAILFTVVAALFIWNICWGRRGITDFIARYPDADLRTAKNGQHVKVTGVVTCGNVPLESSFHRVPRCVYTSTCLYEYRGWGSKPANSSHRHFTWGLRSSERHVVDFYISDFQSGLRALVKTGSGAKVTPLVDDSVVIDFKQGSEQVSPDFVRWLGKKNLTSDDRIMRLKEGYIKEGSTVSVIGVVQRNDNVLMIVPSSEPLAAGWQWRRCTFPTSLEGIVLRCEDSSNVDAIPV</sequence>
<dbReference type="EMBL" id="AC051629">
    <property type="protein sequence ID" value="AAF99847.1"/>
    <property type="molecule type" value="Genomic_DNA"/>
</dbReference>
<dbReference type="EMBL" id="CP002684">
    <property type="protein sequence ID" value="AEE29511.1"/>
    <property type="molecule type" value="Genomic_DNA"/>
</dbReference>
<dbReference type="EMBL" id="AY050887">
    <property type="protein sequence ID" value="AAK92824.1"/>
    <property type="molecule type" value="mRNA"/>
</dbReference>
<dbReference type="EMBL" id="AY117261">
    <property type="protein sequence ID" value="AAM51336.1"/>
    <property type="molecule type" value="mRNA"/>
</dbReference>
<dbReference type="EMBL" id="BT000665">
    <property type="protein sequence ID" value="AAN31812.1"/>
    <property type="molecule type" value="mRNA"/>
</dbReference>
<dbReference type="PIR" id="H86303">
    <property type="entry name" value="H86303"/>
</dbReference>
<dbReference type="RefSeq" id="NP_564009.1">
    <property type="nucleotide sequence ID" value="NM_101547.4"/>
</dbReference>
<dbReference type="BioGRID" id="23497">
    <property type="interactions" value="3"/>
</dbReference>
<dbReference type="FunCoup" id="Q9FZ45">
    <property type="interactions" value="1715"/>
</dbReference>
<dbReference type="IntAct" id="Q9FZ45">
    <property type="interactions" value="2"/>
</dbReference>
<dbReference type="iPTMnet" id="Q9FZ45"/>
<dbReference type="PaxDb" id="3702-AT1G16860.1"/>
<dbReference type="ProteomicsDB" id="234341"/>
<dbReference type="EnsemblPlants" id="AT1G16860.1">
    <property type="protein sequence ID" value="AT1G16860.1"/>
    <property type="gene ID" value="AT1G16860"/>
</dbReference>
<dbReference type="GeneID" id="838257"/>
<dbReference type="Gramene" id="AT1G16860.1">
    <property type="protein sequence ID" value="AT1G16860.1"/>
    <property type="gene ID" value="AT1G16860"/>
</dbReference>
<dbReference type="KEGG" id="ath:AT1G16860"/>
<dbReference type="Araport" id="AT1G16860"/>
<dbReference type="TAIR" id="AT1G16860">
    <property type="gene designation" value="SHOU4L"/>
</dbReference>
<dbReference type="eggNOG" id="ENOG502QRIM">
    <property type="taxonomic scope" value="Eukaryota"/>
</dbReference>
<dbReference type="HOGENOM" id="CLU_041384_0_0_1"/>
<dbReference type="InParanoid" id="Q9FZ45"/>
<dbReference type="OMA" id="FIWNICW"/>
<dbReference type="OrthoDB" id="1899156at2759"/>
<dbReference type="PhylomeDB" id="Q9FZ45"/>
<dbReference type="PRO" id="PR:Q9FZ45"/>
<dbReference type="Proteomes" id="UP000006548">
    <property type="component" value="Chromosome 1"/>
</dbReference>
<dbReference type="ExpressionAtlas" id="Q9FZ45">
    <property type="expression patterns" value="baseline and differential"/>
</dbReference>
<dbReference type="GO" id="GO:0005886">
    <property type="term" value="C:plasma membrane"/>
    <property type="evidence" value="ECO:0007005"/>
    <property type="project" value="TAIR"/>
</dbReference>
<dbReference type="GO" id="GO:2001007">
    <property type="term" value="P:negative regulation of cellulose biosynthetic process"/>
    <property type="evidence" value="ECO:0000316"/>
    <property type="project" value="TAIR"/>
</dbReference>
<dbReference type="InterPro" id="IPR040339">
    <property type="entry name" value="At1g16860-like"/>
</dbReference>
<dbReference type="PANTHER" id="PTHR33709:SF4">
    <property type="entry name" value="OS08G0230200 PROTEIN"/>
    <property type="match status" value="1"/>
</dbReference>
<dbReference type="PANTHER" id="PTHR33709">
    <property type="entry name" value="OSJNBA0035M09.9 PROTEIN"/>
    <property type="match status" value="1"/>
</dbReference>
<feature type="chain" id="PRO_0000302045" description="Uncharacterized membrane protein At1g16860">
    <location>
        <begin position="1"/>
        <end position="474"/>
    </location>
</feature>
<feature type="transmembrane region" description="Helical" evidence="1">
    <location>
        <begin position="210"/>
        <end position="230"/>
    </location>
</feature>
<feature type="transmembrane region" description="Helical" evidence="1">
    <location>
        <begin position="236"/>
        <end position="256"/>
    </location>
</feature>
<feature type="region of interest" description="Disordered" evidence="2">
    <location>
        <begin position="1"/>
        <end position="137"/>
    </location>
</feature>
<feature type="compositionally biased region" description="Polar residues" evidence="2">
    <location>
        <begin position="1"/>
        <end position="14"/>
    </location>
</feature>
<feature type="compositionally biased region" description="Polar residues" evidence="2">
    <location>
        <begin position="73"/>
        <end position="83"/>
    </location>
</feature>
<feature type="compositionally biased region" description="Polar residues" evidence="2">
    <location>
        <begin position="97"/>
        <end position="113"/>
    </location>
</feature>
<feature type="compositionally biased region" description="Polar residues" evidence="2">
    <location>
        <begin position="125"/>
        <end position="137"/>
    </location>
</feature>
<feature type="modified residue" description="Phosphoserine" evidence="4">
    <location>
        <position position="45"/>
    </location>
</feature>
<feature type="modified residue" description="Phosphoserine" evidence="4">
    <location>
        <position position="169"/>
    </location>
</feature>
<comment type="subcellular location">
    <subcellularLocation>
        <location evidence="3">Membrane</location>
        <topology evidence="3">Multi-pass membrane protein</topology>
    </subcellularLocation>
</comment>
<gene>
    <name type="ordered locus">At1g16860</name>
    <name type="ORF">F6I1.14</name>
</gene>
<name>Y1686_ARATH</name>
<protein>
    <recommendedName>
        <fullName>Uncharacterized membrane protein At1g16860</fullName>
    </recommendedName>
</protein>
<keyword id="KW-0472">Membrane</keyword>
<keyword id="KW-0597">Phosphoprotein</keyword>
<keyword id="KW-1185">Reference proteome</keyword>
<keyword id="KW-0812">Transmembrane</keyword>
<keyword id="KW-1133">Transmembrane helix</keyword>
<organism>
    <name type="scientific">Arabidopsis thaliana</name>
    <name type="common">Mouse-ear cress</name>
    <dbReference type="NCBI Taxonomy" id="3702"/>
    <lineage>
        <taxon>Eukaryota</taxon>
        <taxon>Viridiplantae</taxon>
        <taxon>Streptophyta</taxon>
        <taxon>Embryophyta</taxon>
        <taxon>Tracheophyta</taxon>
        <taxon>Spermatophyta</taxon>
        <taxon>Magnoliopsida</taxon>
        <taxon>eudicotyledons</taxon>
        <taxon>Gunneridae</taxon>
        <taxon>Pentapetalae</taxon>
        <taxon>rosids</taxon>
        <taxon>malvids</taxon>
        <taxon>Brassicales</taxon>
        <taxon>Brassicaceae</taxon>
        <taxon>Camelineae</taxon>
        <taxon>Arabidopsis</taxon>
    </lineage>
</organism>
<proteinExistence type="evidence at protein level"/>
<reference key="1">
    <citation type="journal article" date="2000" name="Nature">
        <title>Sequence and analysis of chromosome 1 of the plant Arabidopsis thaliana.</title>
        <authorList>
            <person name="Theologis A."/>
            <person name="Ecker J.R."/>
            <person name="Palm C.J."/>
            <person name="Federspiel N.A."/>
            <person name="Kaul S."/>
            <person name="White O."/>
            <person name="Alonso J."/>
            <person name="Altafi H."/>
            <person name="Araujo R."/>
            <person name="Bowman C.L."/>
            <person name="Brooks S.Y."/>
            <person name="Buehler E."/>
            <person name="Chan A."/>
            <person name="Chao Q."/>
            <person name="Chen H."/>
            <person name="Cheuk R.F."/>
            <person name="Chin C.W."/>
            <person name="Chung M.K."/>
            <person name="Conn L."/>
            <person name="Conway A.B."/>
            <person name="Conway A.R."/>
            <person name="Creasy T.H."/>
            <person name="Dewar K."/>
            <person name="Dunn P."/>
            <person name="Etgu P."/>
            <person name="Feldblyum T.V."/>
            <person name="Feng J.-D."/>
            <person name="Fong B."/>
            <person name="Fujii C.Y."/>
            <person name="Gill J.E."/>
            <person name="Goldsmith A.D."/>
            <person name="Haas B."/>
            <person name="Hansen N.F."/>
            <person name="Hughes B."/>
            <person name="Huizar L."/>
            <person name="Hunter J.L."/>
            <person name="Jenkins J."/>
            <person name="Johnson-Hopson C."/>
            <person name="Khan S."/>
            <person name="Khaykin E."/>
            <person name="Kim C.J."/>
            <person name="Koo H.L."/>
            <person name="Kremenetskaia I."/>
            <person name="Kurtz D.B."/>
            <person name="Kwan A."/>
            <person name="Lam B."/>
            <person name="Langin-Hooper S."/>
            <person name="Lee A."/>
            <person name="Lee J.M."/>
            <person name="Lenz C.A."/>
            <person name="Li J.H."/>
            <person name="Li Y.-P."/>
            <person name="Lin X."/>
            <person name="Liu S.X."/>
            <person name="Liu Z.A."/>
            <person name="Luros J.S."/>
            <person name="Maiti R."/>
            <person name="Marziali A."/>
            <person name="Militscher J."/>
            <person name="Miranda M."/>
            <person name="Nguyen M."/>
            <person name="Nierman W.C."/>
            <person name="Osborne B.I."/>
            <person name="Pai G."/>
            <person name="Peterson J."/>
            <person name="Pham P.K."/>
            <person name="Rizzo M."/>
            <person name="Rooney T."/>
            <person name="Rowley D."/>
            <person name="Sakano H."/>
            <person name="Salzberg S.L."/>
            <person name="Schwartz J.R."/>
            <person name="Shinn P."/>
            <person name="Southwick A.M."/>
            <person name="Sun H."/>
            <person name="Tallon L.J."/>
            <person name="Tambunga G."/>
            <person name="Toriumi M.J."/>
            <person name="Town C.D."/>
            <person name="Utterback T."/>
            <person name="Van Aken S."/>
            <person name="Vaysberg M."/>
            <person name="Vysotskaia V.S."/>
            <person name="Walker M."/>
            <person name="Wu D."/>
            <person name="Yu G."/>
            <person name="Fraser C.M."/>
            <person name="Venter J.C."/>
            <person name="Davis R.W."/>
        </authorList>
    </citation>
    <scope>NUCLEOTIDE SEQUENCE [LARGE SCALE GENOMIC DNA]</scope>
    <source>
        <strain>cv. Columbia</strain>
    </source>
</reference>
<reference key="2">
    <citation type="journal article" date="2017" name="Plant J.">
        <title>Araport11: a complete reannotation of the Arabidopsis thaliana reference genome.</title>
        <authorList>
            <person name="Cheng C.Y."/>
            <person name="Krishnakumar V."/>
            <person name="Chan A.P."/>
            <person name="Thibaud-Nissen F."/>
            <person name="Schobel S."/>
            <person name="Town C.D."/>
        </authorList>
    </citation>
    <scope>GENOME REANNOTATION</scope>
    <source>
        <strain>cv. Columbia</strain>
    </source>
</reference>
<reference key="3">
    <citation type="journal article" date="2003" name="Science">
        <title>Empirical analysis of transcriptional activity in the Arabidopsis genome.</title>
        <authorList>
            <person name="Yamada K."/>
            <person name="Lim J."/>
            <person name="Dale J.M."/>
            <person name="Chen H."/>
            <person name="Shinn P."/>
            <person name="Palm C.J."/>
            <person name="Southwick A.M."/>
            <person name="Wu H.C."/>
            <person name="Kim C.J."/>
            <person name="Nguyen M."/>
            <person name="Pham P.K."/>
            <person name="Cheuk R.F."/>
            <person name="Karlin-Newmann G."/>
            <person name="Liu S.X."/>
            <person name="Lam B."/>
            <person name="Sakano H."/>
            <person name="Wu T."/>
            <person name="Yu G."/>
            <person name="Miranda M."/>
            <person name="Quach H.L."/>
            <person name="Tripp M."/>
            <person name="Chang C.H."/>
            <person name="Lee J.M."/>
            <person name="Toriumi M.J."/>
            <person name="Chan M.M."/>
            <person name="Tang C.C."/>
            <person name="Onodera C.S."/>
            <person name="Deng J.M."/>
            <person name="Akiyama K."/>
            <person name="Ansari Y."/>
            <person name="Arakawa T."/>
            <person name="Banh J."/>
            <person name="Banno F."/>
            <person name="Bowser L."/>
            <person name="Brooks S.Y."/>
            <person name="Carninci P."/>
            <person name="Chao Q."/>
            <person name="Choy N."/>
            <person name="Enju A."/>
            <person name="Goldsmith A.D."/>
            <person name="Gurjal M."/>
            <person name="Hansen N.F."/>
            <person name="Hayashizaki Y."/>
            <person name="Johnson-Hopson C."/>
            <person name="Hsuan V.W."/>
            <person name="Iida K."/>
            <person name="Karnes M."/>
            <person name="Khan S."/>
            <person name="Koesema E."/>
            <person name="Ishida J."/>
            <person name="Jiang P.X."/>
            <person name="Jones T."/>
            <person name="Kawai J."/>
            <person name="Kamiya A."/>
            <person name="Meyers C."/>
            <person name="Nakajima M."/>
            <person name="Narusaka M."/>
            <person name="Seki M."/>
            <person name="Sakurai T."/>
            <person name="Satou M."/>
            <person name="Tamse R."/>
            <person name="Vaysberg M."/>
            <person name="Wallender E.K."/>
            <person name="Wong C."/>
            <person name="Yamamura Y."/>
            <person name="Yuan S."/>
            <person name="Shinozaki K."/>
            <person name="Davis R.W."/>
            <person name="Theologis A."/>
            <person name="Ecker J.R."/>
        </authorList>
    </citation>
    <scope>NUCLEOTIDE SEQUENCE [LARGE SCALE MRNA]</scope>
    <source>
        <strain>cv. Columbia</strain>
    </source>
</reference>
<reference key="4">
    <citation type="journal article" date="2009" name="Plant Physiol.">
        <title>Large-scale Arabidopsis phosphoproteome profiling reveals novel chloroplast kinase substrates and phosphorylation networks.</title>
        <authorList>
            <person name="Reiland S."/>
            <person name="Messerli G."/>
            <person name="Baerenfaller K."/>
            <person name="Gerrits B."/>
            <person name="Endler A."/>
            <person name="Grossmann J."/>
            <person name="Gruissem W."/>
            <person name="Baginsky S."/>
        </authorList>
    </citation>
    <scope>PHOSPHORYLATION [LARGE SCALE ANALYSIS] AT SER-45 AND SER-169</scope>
    <scope>IDENTIFICATION BY MASS SPECTROMETRY [LARGE SCALE ANALYSIS]</scope>
</reference>
<accession>Q9FZ45</accession>